<name>GGGPS_PYRAB</name>
<reference key="1">
    <citation type="journal article" date="2003" name="Mol. Microbiol.">
        <title>An integrated analysis of the genome of the hyperthermophilic archaeon Pyrococcus abyssi.</title>
        <authorList>
            <person name="Cohen G.N."/>
            <person name="Barbe V."/>
            <person name="Flament D."/>
            <person name="Galperin M."/>
            <person name="Heilig R."/>
            <person name="Lecompte O."/>
            <person name="Poch O."/>
            <person name="Prieur D."/>
            <person name="Querellou J."/>
            <person name="Ripp R."/>
            <person name="Thierry J.-C."/>
            <person name="Van der Oost J."/>
            <person name="Weissenbach J."/>
            <person name="Zivanovic Y."/>
            <person name="Forterre P."/>
        </authorList>
    </citation>
    <scope>NUCLEOTIDE SEQUENCE [LARGE SCALE GENOMIC DNA]</scope>
    <source>
        <strain>GE5 / Orsay</strain>
    </source>
</reference>
<reference key="2">
    <citation type="journal article" date="2012" name="Curr. Microbiol.">
        <title>Re-annotation of two hyperthermophilic archaea Pyrococcus abyssi GE5 and Pyrococcus furiosus DSM 3638.</title>
        <authorList>
            <person name="Gao J."/>
            <person name="Wang J."/>
        </authorList>
    </citation>
    <scope>GENOME REANNOTATION</scope>
    <source>
        <strain>GE5 / Orsay</strain>
    </source>
</reference>
<proteinExistence type="inferred from homology"/>
<feature type="chain" id="PRO_0000138738" description="Geranylgeranylglyceryl phosphate synthase">
    <location>
        <begin position="1"/>
        <end position="252"/>
    </location>
</feature>
<feature type="binding site" evidence="1">
    <location>
        <position position="27"/>
    </location>
    <ligand>
        <name>Mg(2+)</name>
        <dbReference type="ChEBI" id="CHEBI:18420"/>
    </ligand>
</feature>
<feature type="binding site" evidence="1">
    <location>
        <position position="56"/>
    </location>
    <ligand>
        <name>Mg(2+)</name>
        <dbReference type="ChEBI" id="CHEBI:18420"/>
    </ligand>
</feature>
<feature type="binding site" evidence="1">
    <location>
        <begin position="175"/>
        <end position="181"/>
    </location>
    <ligand>
        <name>sn-glycerol 1-phosphate</name>
        <dbReference type="ChEBI" id="CHEBI:57685"/>
    </ligand>
</feature>
<feature type="binding site" evidence="1">
    <location>
        <begin position="206"/>
        <end position="207"/>
    </location>
    <ligand>
        <name>sn-glycerol 1-phosphate</name>
        <dbReference type="ChEBI" id="CHEBI:57685"/>
    </ligand>
</feature>
<feature type="binding site" evidence="1">
    <location>
        <begin position="228"/>
        <end position="229"/>
    </location>
    <ligand>
        <name>sn-glycerol 1-phosphate</name>
        <dbReference type="ChEBI" id="CHEBI:57685"/>
    </ligand>
</feature>
<sequence length="252" mass="27059">MVKIGKVEMYINEELESGKKLHFVLIDPDDTHPEMAGRIAELCENVGVNAIMVGGSTGAEGEMLDNVVKAIKESSSLPVILFPGSHSGISKYADAIFFMSLLNSRNPFFITGAQALGAFTVKRYGLEPIPMAYIIVEPGETVGWVGDAKPIPRHKPKLAAAYALAGQYLGMRLVYLEAGSGSPEPVPPEMVRIVKSVIDVPLIVGGGIRTGDQVRELTKAGADIIVTGTAIESTKSIDEAKRKLEEIRRGLK</sequence>
<comment type="function">
    <text evidence="1">Prenyltransferase that catalyzes the transfer of the geranylgeranyl moiety of geranylgeranyl diphosphate (GGPP) to the C3 hydroxyl of sn-glycerol-1-phosphate (G1P). This reaction is the first ether-bond-formation step in the biosynthesis of archaeal membrane lipids.</text>
</comment>
<comment type="catalytic activity">
    <reaction evidence="1">
        <text>sn-glycerol 1-phosphate + (2E,6E,10E)-geranylgeranyl diphosphate = sn-3-O-(geranylgeranyl)glycerol 1-phosphate + diphosphate</text>
        <dbReference type="Rhea" id="RHEA:23404"/>
        <dbReference type="ChEBI" id="CHEBI:33019"/>
        <dbReference type="ChEBI" id="CHEBI:57677"/>
        <dbReference type="ChEBI" id="CHEBI:57685"/>
        <dbReference type="ChEBI" id="CHEBI:58756"/>
        <dbReference type="EC" id="2.5.1.41"/>
    </reaction>
</comment>
<comment type="cofactor">
    <cofactor evidence="1">
        <name>Mg(2+)</name>
        <dbReference type="ChEBI" id="CHEBI:18420"/>
    </cofactor>
</comment>
<comment type="pathway">
    <text evidence="1">Membrane lipid metabolism; glycerophospholipid metabolism.</text>
</comment>
<comment type="subcellular location">
    <subcellularLocation>
        <location evidence="1">Cytoplasm</location>
    </subcellularLocation>
</comment>
<comment type="similarity">
    <text evidence="1">Belongs to the GGGP/HepGP synthase family. Group II subfamily.</text>
</comment>
<protein>
    <recommendedName>
        <fullName evidence="1">Geranylgeranylglyceryl phosphate synthase</fullName>
        <shortName evidence="1">GGGP synthase</shortName>
        <shortName evidence="1">GGGPS</shortName>
        <ecNumber evidence="1">2.5.1.41</ecNumber>
    </recommendedName>
    <alternativeName>
        <fullName evidence="1">(S)-3-O-geranylgeranylglyceryl phosphate synthase</fullName>
    </alternativeName>
    <alternativeName>
        <fullName evidence="1">Phosphoglycerol geranylgeranyltransferase</fullName>
    </alternativeName>
</protein>
<evidence type="ECO:0000255" key="1">
    <source>
        <dbReference type="HAMAP-Rule" id="MF_00112"/>
    </source>
</evidence>
<dbReference type="EC" id="2.5.1.41" evidence="1"/>
<dbReference type="EMBL" id="AJ248286">
    <property type="protein sequence ID" value="CAB50020.1"/>
    <property type="molecule type" value="Genomic_DNA"/>
</dbReference>
<dbReference type="EMBL" id="HE613800">
    <property type="protein sequence ID" value="CCE70523.1"/>
    <property type="molecule type" value="Genomic_DNA"/>
</dbReference>
<dbReference type="PIR" id="G75089">
    <property type="entry name" value="G75089"/>
</dbReference>
<dbReference type="RefSeq" id="WP_010868227.1">
    <property type="nucleotide sequence ID" value="NC_000868.1"/>
</dbReference>
<dbReference type="SMR" id="Q9UZN7"/>
<dbReference type="STRING" id="272844.PAB0735"/>
<dbReference type="KEGG" id="pab:PAB0735"/>
<dbReference type="PATRIC" id="fig|272844.11.peg.1166"/>
<dbReference type="eggNOG" id="arCOG01085">
    <property type="taxonomic scope" value="Archaea"/>
</dbReference>
<dbReference type="HOGENOM" id="CLU_068610_0_0_2"/>
<dbReference type="OrthoDB" id="7409at2157"/>
<dbReference type="PhylomeDB" id="Q9UZN7"/>
<dbReference type="UniPathway" id="UPA00940"/>
<dbReference type="Proteomes" id="UP000000810">
    <property type="component" value="Chromosome"/>
</dbReference>
<dbReference type="Proteomes" id="UP000009139">
    <property type="component" value="Chromosome"/>
</dbReference>
<dbReference type="GO" id="GO:0005737">
    <property type="term" value="C:cytoplasm"/>
    <property type="evidence" value="ECO:0007669"/>
    <property type="project" value="UniProtKB-SubCell"/>
</dbReference>
<dbReference type="GO" id="GO:0000107">
    <property type="term" value="F:imidazoleglycerol-phosphate synthase activity"/>
    <property type="evidence" value="ECO:0007669"/>
    <property type="project" value="TreeGrafter"/>
</dbReference>
<dbReference type="GO" id="GO:0000287">
    <property type="term" value="F:magnesium ion binding"/>
    <property type="evidence" value="ECO:0007669"/>
    <property type="project" value="UniProtKB-UniRule"/>
</dbReference>
<dbReference type="GO" id="GO:0047294">
    <property type="term" value="F:phosphoglycerol geranylgeranyltransferase activity"/>
    <property type="evidence" value="ECO:0007669"/>
    <property type="project" value="UniProtKB-UniRule"/>
</dbReference>
<dbReference type="GO" id="GO:0046474">
    <property type="term" value="P:glycerophospholipid biosynthetic process"/>
    <property type="evidence" value="ECO:0007669"/>
    <property type="project" value="UniProtKB-UniRule"/>
</dbReference>
<dbReference type="CDD" id="cd02812">
    <property type="entry name" value="PcrB_like"/>
    <property type="match status" value="1"/>
</dbReference>
<dbReference type="FunFam" id="3.20.20.390:FF:000001">
    <property type="entry name" value="Heptaprenylglyceryl phosphate synthase"/>
    <property type="match status" value="1"/>
</dbReference>
<dbReference type="Gene3D" id="3.20.20.390">
    <property type="entry name" value="FMN-linked oxidoreductases"/>
    <property type="match status" value="1"/>
</dbReference>
<dbReference type="HAMAP" id="MF_00112">
    <property type="entry name" value="GGGP_HepGP_synthase"/>
    <property type="match status" value="1"/>
</dbReference>
<dbReference type="InterPro" id="IPR038597">
    <property type="entry name" value="GGGP/HepGP_synthase_sf"/>
</dbReference>
<dbReference type="InterPro" id="IPR008205">
    <property type="entry name" value="GGGP_HepGP_synthase"/>
</dbReference>
<dbReference type="InterPro" id="IPR010946">
    <property type="entry name" value="GGGP_synth"/>
</dbReference>
<dbReference type="InterPro" id="IPR050064">
    <property type="entry name" value="IGPS_HisA/HisF"/>
</dbReference>
<dbReference type="NCBIfam" id="TIGR01769">
    <property type="entry name" value="GGGP"/>
    <property type="match status" value="1"/>
</dbReference>
<dbReference type="NCBIfam" id="TIGR01768">
    <property type="entry name" value="GGGP-family"/>
    <property type="match status" value="1"/>
</dbReference>
<dbReference type="NCBIfam" id="NF003198">
    <property type="entry name" value="PRK04169.1-2"/>
    <property type="match status" value="1"/>
</dbReference>
<dbReference type="PANTHER" id="PTHR21235:SF22">
    <property type="entry name" value="GERANYLGERANYLGLYCERYL PHOSPHATE SYNTHASE"/>
    <property type="match status" value="1"/>
</dbReference>
<dbReference type="PANTHER" id="PTHR21235">
    <property type="entry name" value="IMIDAZOLE GLYCEROL PHOSPHATE SYNTHASE SUBUNIT HISF/H IGP SYNTHASE SUBUNIT HISF/H"/>
    <property type="match status" value="1"/>
</dbReference>
<dbReference type="Pfam" id="PF01884">
    <property type="entry name" value="PcrB"/>
    <property type="match status" value="1"/>
</dbReference>
<dbReference type="SUPFAM" id="SSF51395">
    <property type="entry name" value="FMN-linked oxidoreductases"/>
    <property type="match status" value="1"/>
</dbReference>
<accession>Q9UZN7</accession>
<accession>G8ZJR4</accession>
<keyword id="KW-0963">Cytoplasm</keyword>
<keyword id="KW-0444">Lipid biosynthesis</keyword>
<keyword id="KW-0443">Lipid metabolism</keyword>
<keyword id="KW-0460">Magnesium</keyword>
<keyword id="KW-0479">Metal-binding</keyword>
<keyword id="KW-0594">Phospholipid biosynthesis</keyword>
<keyword id="KW-1208">Phospholipid metabolism</keyword>
<keyword id="KW-0808">Transferase</keyword>
<organism>
    <name type="scientific">Pyrococcus abyssi (strain GE5 / Orsay)</name>
    <dbReference type="NCBI Taxonomy" id="272844"/>
    <lineage>
        <taxon>Archaea</taxon>
        <taxon>Methanobacteriati</taxon>
        <taxon>Methanobacteriota</taxon>
        <taxon>Thermococci</taxon>
        <taxon>Thermococcales</taxon>
        <taxon>Thermococcaceae</taxon>
        <taxon>Pyrococcus</taxon>
    </lineage>
</organism>
<gene>
    <name type="ordered locus">PYRAB11090</name>
    <name type="ORF">PAB0735</name>
</gene>